<proteinExistence type="inferred from homology"/>
<reference key="1">
    <citation type="journal article" date="2007" name="Proc. Natl. Acad. Sci. U.S.A.">
        <title>Genome and proteome of long-chain alkane degrading Geobacillus thermodenitrificans NG80-2 isolated from a deep-subsurface oil reservoir.</title>
        <authorList>
            <person name="Feng L."/>
            <person name="Wang W."/>
            <person name="Cheng J."/>
            <person name="Ren Y."/>
            <person name="Zhao G."/>
            <person name="Gao C."/>
            <person name="Tang Y."/>
            <person name="Liu X."/>
            <person name="Han W."/>
            <person name="Peng X."/>
            <person name="Liu R."/>
            <person name="Wang L."/>
        </authorList>
    </citation>
    <scope>NUCLEOTIDE SEQUENCE [LARGE SCALE GENOMIC DNA]</scope>
    <source>
        <strain>NG80-2</strain>
    </source>
</reference>
<evidence type="ECO:0000255" key="1">
    <source>
        <dbReference type="HAMAP-Rule" id="MF_00921"/>
    </source>
</evidence>
<protein>
    <recommendedName>
        <fullName evidence="1">Putative pyruvate, phosphate dikinase regulatory protein</fullName>
        <shortName evidence="1">PPDK regulatory protein</shortName>
        <ecNumber evidence="1">2.7.11.32</ecNumber>
        <ecNumber evidence="1">2.7.4.27</ecNumber>
    </recommendedName>
</protein>
<accession>A4IR12</accession>
<sequence length="266" mass="29802">MNQRLVYVVSDSGGETAELVVKAAASQFYASPVQVKRVPYVEDKTTLAEVVALAKMNQAIIAFTLVVPEMREFLLTEAAREGVVAYDIIGPLIEKMSDLFQLKPRYEPGQVRVLDEDYFKKIEAIEFAVKYDDGRDPRGILRADIVLIGVSRTSKTPLSQYLAHKRLKVANVPIVPEVEPPEQLFQVGPSKCFGLKISPDKLLSIRRERLKSLGLNDQAIYANMDRIKEELAYFDGVVKKIGCDVIDVTNKAVEETASIIMKKLKR</sequence>
<dbReference type="EC" id="2.7.11.32" evidence="1"/>
<dbReference type="EC" id="2.7.4.27" evidence="1"/>
<dbReference type="EMBL" id="CP000557">
    <property type="protein sequence ID" value="ABO67766.1"/>
    <property type="molecule type" value="Genomic_DNA"/>
</dbReference>
<dbReference type="RefSeq" id="WP_008879899.1">
    <property type="nucleotide sequence ID" value="NC_009328.1"/>
</dbReference>
<dbReference type="SMR" id="A4IR12"/>
<dbReference type="GeneID" id="87623432"/>
<dbReference type="KEGG" id="gtn:GTNG_2421"/>
<dbReference type="eggNOG" id="COG1806">
    <property type="taxonomic scope" value="Bacteria"/>
</dbReference>
<dbReference type="HOGENOM" id="CLU_046206_2_1_9"/>
<dbReference type="Proteomes" id="UP000001578">
    <property type="component" value="Chromosome"/>
</dbReference>
<dbReference type="GO" id="GO:0043531">
    <property type="term" value="F:ADP binding"/>
    <property type="evidence" value="ECO:0007669"/>
    <property type="project" value="UniProtKB-UniRule"/>
</dbReference>
<dbReference type="GO" id="GO:0005524">
    <property type="term" value="F:ATP binding"/>
    <property type="evidence" value="ECO:0007669"/>
    <property type="project" value="InterPro"/>
</dbReference>
<dbReference type="GO" id="GO:0016776">
    <property type="term" value="F:phosphotransferase activity, phosphate group as acceptor"/>
    <property type="evidence" value="ECO:0007669"/>
    <property type="project" value="UniProtKB-UniRule"/>
</dbReference>
<dbReference type="GO" id="GO:0004674">
    <property type="term" value="F:protein serine/threonine kinase activity"/>
    <property type="evidence" value="ECO:0007669"/>
    <property type="project" value="UniProtKB-UniRule"/>
</dbReference>
<dbReference type="HAMAP" id="MF_00921">
    <property type="entry name" value="PDRP"/>
    <property type="match status" value="1"/>
</dbReference>
<dbReference type="InterPro" id="IPR005177">
    <property type="entry name" value="Kinase-pyrophosphorylase"/>
</dbReference>
<dbReference type="InterPro" id="IPR026565">
    <property type="entry name" value="PPDK_reg"/>
</dbReference>
<dbReference type="NCBIfam" id="NF003742">
    <property type="entry name" value="PRK05339.1"/>
    <property type="match status" value="1"/>
</dbReference>
<dbReference type="PANTHER" id="PTHR31756">
    <property type="entry name" value="PYRUVATE, PHOSPHATE DIKINASE REGULATORY PROTEIN 1, CHLOROPLASTIC"/>
    <property type="match status" value="1"/>
</dbReference>
<dbReference type="PANTHER" id="PTHR31756:SF3">
    <property type="entry name" value="PYRUVATE, PHOSPHATE DIKINASE REGULATORY PROTEIN 1, CHLOROPLASTIC"/>
    <property type="match status" value="1"/>
</dbReference>
<dbReference type="Pfam" id="PF03618">
    <property type="entry name" value="Kinase-PPPase"/>
    <property type="match status" value="1"/>
</dbReference>
<organism>
    <name type="scientific">Geobacillus thermodenitrificans (strain NG80-2)</name>
    <dbReference type="NCBI Taxonomy" id="420246"/>
    <lineage>
        <taxon>Bacteria</taxon>
        <taxon>Bacillati</taxon>
        <taxon>Bacillota</taxon>
        <taxon>Bacilli</taxon>
        <taxon>Bacillales</taxon>
        <taxon>Anoxybacillaceae</taxon>
        <taxon>Geobacillus</taxon>
    </lineage>
</organism>
<gene>
    <name type="ordered locus">GTNG_2421</name>
</gene>
<comment type="function">
    <text evidence="1">Bifunctional serine/threonine kinase and phosphorylase involved in the regulation of the pyruvate, phosphate dikinase (PPDK) by catalyzing its phosphorylation/dephosphorylation.</text>
</comment>
<comment type="catalytic activity">
    <reaction evidence="1">
        <text>N(tele)-phospho-L-histidyl/L-threonyl-[pyruvate, phosphate dikinase] + ADP = N(tele)-phospho-L-histidyl/O-phospho-L-threonyl-[pyruvate, phosphate dikinase] + AMP + H(+)</text>
        <dbReference type="Rhea" id="RHEA:43692"/>
        <dbReference type="Rhea" id="RHEA-COMP:10650"/>
        <dbReference type="Rhea" id="RHEA-COMP:10651"/>
        <dbReference type="ChEBI" id="CHEBI:15378"/>
        <dbReference type="ChEBI" id="CHEBI:30013"/>
        <dbReference type="ChEBI" id="CHEBI:61977"/>
        <dbReference type="ChEBI" id="CHEBI:83586"/>
        <dbReference type="ChEBI" id="CHEBI:456215"/>
        <dbReference type="ChEBI" id="CHEBI:456216"/>
        <dbReference type="EC" id="2.7.11.32"/>
    </reaction>
</comment>
<comment type="catalytic activity">
    <reaction evidence="1">
        <text>N(tele)-phospho-L-histidyl/O-phospho-L-threonyl-[pyruvate, phosphate dikinase] + phosphate + H(+) = N(tele)-phospho-L-histidyl/L-threonyl-[pyruvate, phosphate dikinase] + diphosphate</text>
        <dbReference type="Rhea" id="RHEA:43696"/>
        <dbReference type="Rhea" id="RHEA-COMP:10650"/>
        <dbReference type="Rhea" id="RHEA-COMP:10651"/>
        <dbReference type="ChEBI" id="CHEBI:15378"/>
        <dbReference type="ChEBI" id="CHEBI:30013"/>
        <dbReference type="ChEBI" id="CHEBI:33019"/>
        <dbReference type="ChEBI" id="CHEBI:43474"/>
        <dbReference type="ChEBI" id="CHEBI:61977"/>
        <dbReference type="ChEBI" id="CHEBI:83586"/>
        <dbReference type="EC" id="2.7.4.27"/>
    </reaction>
</comment>
<comment type="similarity">
    <text evidence="1">Belongs to the pyruvate, phosphate/water dikinase regulatory protein family. PDRP subfamily.</text>
</comment>
<name>PDRP_GEOTN</name>
<keyword id="KW-0418">Kinase</keyword>
<keyword id="KW-0547">Nucleotide-binding</keyword>
<keyword id="KW-0723">Serine/threonine-protein kinase</keyword>
<keyword id="KW-0808">Transferase</keyword>
<feature type="chain" id="PRO_0000316676" description="Putative pyruvate, phosphate dikinase regulatory protein">
    <location>
        <begin position="1"/>
        <end position="266"/>
    </location>
</feature>
<feature type="binding site" evidence="1">
    <location>
        <begin position="149"/>
        <end position="156"/>
    </location>
    <ligand>
        <name>ADP</name>
        <dbReference type="ChEBI" id="CHEBI:456216"/>
    </ligand>
</feature>